<gene>
    <name evidence="1" type="primary">ppnP</name>
    <name type="ordered locus">VV2_1219</name>
</gene>
<dbReference type="EC" id="2.4.2.1" evidence="1"/>
<dbReference type="EC" id="2.4.2.2" evidence="1"/>
<dbReference type="EMBL" id="AE016796">
    <property type="protein sequence ID" value="AAO08116.1"/>
    <property type="molecule type" value="Genomic_DNA"/>
</dbReference>
<dbReference type="RefSeq" id="WP_011082111.1">
    <property type="nucleotide sequence ID" value="NC_004460.2"/>
</dbReference>
<dbReference type="SMR" id="Q8D4S0"/>
<dbReference type="KEGG" id="vvu:VV2_1219"/>
<dbReference type="HOGENOM" id="CLU_157874_0_0_6"/>
<dbReference type="Proteomes" id="UP000002275">
    <property type="component" value="Chromosome 2"/>
</dbReference>
<dbReference type="GO" id="GO:0005829">
    <property type="term" value="C:cytosol"/>
    <property type="evidence" value="ECO:0007669"/>
    <property type="project" value="TreeGrafter"/>
</dbReference>
<dbReference type="GO" id="GO:0047975">
    <property type="term" value="F:guanosine phosphorylase activity"/>
    <property type="evidence" value="ECO:0007669"/>
    <property type="project" value="UniProtKB-EC"/>
</dbReference>
<dbReference type="GO" id="GO:0004731">
    <property type="term" value="F:purine-nucleoside phosphorylase activity"/>
    <property type="evidence" value="ECO:0007669"/>
    <property type="project" value="UniProtKB-UniRule"/>
</dbReference>
<dbReference type="GO" id="GO:0009032">
    <property type="term" value="F:thymidine phosphorylase activity"/>
    <property type="evidence" value="ECO:0007669"/>
    <property type="project" value="UniProtKB-EC"/>
</dbReference>
<dbReference type="GO" id="GO:0004850">
    <property type="term" value="F:uridine phosphorylase activity"/>
    <property type="evidence" value="ECO:0007669"/>
    <property type="project" value="UniProtKB-EC"/>
</dbReference>
<dbReference type="CDD" id="cd20296">
    <property type="entry name" value="cupin_PpnP-like"/>
    <property type="match status" value="1"/>
</dbReference>
<dbReference type="FunFam" id="2.60.120.10:FF:000016">
    <property type="entry name" value="Pyrimidine/purine nucleoside phosphorylase"/>
    <property type="match status" value="1"/>
</dbReference>
<dbReference type="Gene3D" id="2.60.120.10">
    <property type="entry name" value="Jelly Rolls"/>
    <property type="match status" value="1"/>
</dbReference>
<dbReference type="HAMAP" id="MF_01537">
    <property type="entry name" value="Nucleos_phosphorylase_PpnP"/>
    <property type="match status" value="1"/>
</dbReference>
<dbReference type="InterPro" id="IPR009664">
    <property type="entry name" value="Ppnp"/>
</dbReference>
<dbReference type="InterPro" id="IPR014710">
    <property type="entry name" value="RmlC-like_jellyroll"/>
</dbReference>
<dbReference type="InterPro" id="IPR011051">
    <property type="entry name" value="RmlC_Cupin_sf"/>
</dbReference>
<dbReference type="PANTHER" id="PTHR36540">
    <property type="entry name" value="PYRIMIDINE/PURINE NUCLEOSIDE PHOSPHORYLASE"/>
    <property type="match status" value="1"/>
</dbReference>
<dbReference type="PANTHER" id="PTHR36540:SF1">
    <property type="entry name" value="PYRIMIDINE_PURINE NUCLEOSIDE PHOSPHORYLASE"/>
    <property type="match status" value="1"/>
</dbReference>
<dbReference type="Pfam" id="PF06865">
    <property type="entry name" value="Ppnp"/>
    <property type="match status" value="1"/>
</dbReference>
<dbReference type="SUPFAM" id="SSF51182">
    <property type="entry name" value="RmlC-like cupins"/>
    <property type="match status" value="1"/>
</dbReference>
<name>PPNP_VIBVU</name>
<accession>Q8D4S0</accession>
<reference key="1">
    <citation type="submission" date="2002-12" db="EMBL/GenBank/DDBJ databases">
        <title>Complete genome sequence of Vibrio vulnificus CMCP6.</title>
        <authorList>
            <person name="Rhee J.H."/>
            <person name="Kim S.Y."/>
            <person name="Chung S.S."/>
            <person name="Kim J.J."/>
            <person name="Moon Y.H."/>
            <person name="Jeong H."/>
            <person name="Choy H.E."/>
        </authorList>
    </citation>
    <scope>NUCLEOTIDE SEQUENCE [LARGE SCALE GENOMIC DNA]</scope>
    <source>
        <strain>CMCP6</strain>
    </source>
</reference>
<feature type="chain" id="PRO_0000211787" description="Pyrimidine/purine nucleoside phosphorylase">
    <location>
        <begin position="1"/>
        <end position="93"/>
    </location>
</feature>
<proteinExistence type="inferred from homology"/>
<keyword id="KW-0328">Glycosyltransferase</keyword>
<keyword id="KW-0808">Transferase</keyword>
<comment type="function">
    <text evidence="1">Catalyzes the phosphorolysis of diverse nucleosides, yielding D-ribose 1-phosphate and the respective free bases. Can use uridine, adenosine, guanosine, cytidine, thymidine, inosine and xanthosine as substrates. Also catalyzes the reverse reactions.</text>
</comment>
<comment type="catalytic activity">
    <reaction evidence="1">
        <text>a purine D-ribonucleoside + phosphate = a purine nucleobase + alpha-D-ribose 1-phosphate</text>
        <dbReference type="Rhea" id="RHEA:19805"/>
        <dbReference type="ChEBI" id="CHEBI:26386"/>
        <dbReference type="ChEBI" id="CHEBI:43474"/>
        <dbReference type="ChEBI" id="CHEBI:57720"/>
        <dbReference type="ChEBI" id="CHEBI:142355"/>
        <dbReference type="EC" id="2.4.2.1"/>
    </reaction>
</comment>
<comment type="catalytic activity">
    <reaction evidence="1">
        <text>adenosine + phosphate = alpha-D-ribose 1-phosphate + adenine</text>
        <dbReference type="Rhea" id="RHEA:27642"/>
        <dbReference type="ChEBI" id="CHEBI:16335"/>
        <dbReference type="ChEBI" id="CHEBI:16708"/>
        <dbReference type="ChEBI" id="CHEBI:43474"/>
        <dbReference type="ChEBI" id="CHEBI:57720"/>
        <dbReference type="EC" id="2.4.2.1"/>
    </reaction>
</comment>
<comment type="catalytic activity">
    <reaction evidence="1">
        <text>cytidine + phosphate = cytosine + alpha-D-ribose 1-phosphate</text>
        <dbReference type="Rhea" id="RHEA:52540"/>
        <dbReference type="ChEBI" id="CHEBI:16040"/>
        <dbReference type="ChEBI" id="CHEBI:17562"/>
        <dbReference type="ChEBI" id="CHEBI:43474"/>
        <dbReference type="ChEBI" id="CHEBI:57720"/>
        <dbReference type="EC" id="2.4.2.2"/>
    </reaction>
</comment>
<comment type="catalytic activity">
    <reaction evidence="1">
        <text>guanosine + phosphate = alpha-D-ribose 1-phosphate + guanine</text>
        <dbReference type="Rhea" id="RHEA:13233"/>
        <dbReference type="ChEBI" id="CHEBI:16235"/>
        <dbReference type="ChEBI" id="CHEBI:16750"/>
        <dbReference type="ChEBI" id="CHEBI:43474"/>
        <dbReference type="ChEBI" id="CHEBI:57720"/>
        <dbReference type="EC" id="2.4.2.1"/>
    </reaction>
</comment>
<comment type="catalytic activity">
    <reaction evidence="1">
        <text>inosine + phosphate = alpha-D-ribose 1-phosphate + hypoxanthine</text>
        <dbReference type="Rhea" id="RHEA:27646"/>
        <dbReference type="ChEBI" id="CHEBI:17368"/>
        <dbReference type="ChEBI" id="CHEBI:17596"/>
        <dbReference type="ChEBI" id="CHEBI:43474"/>
        <dbReference type="ChEBI" id="CHEBI:57720"/>
        <dbReference type="EC" id="2.4.2.1"/>
    </reaction>
</comment>
<comment type="catalytic activity">
    <reaction evidence="1">
        <text>thymidine + phosphate = 2-deoxy-alpha-D-ribose 1-phosphate + thymine</text>
        <dbReference type="Rhea" id="RHEA:16037"/>
        <dbReference type="ChEBI" id="CHEBI:17748"/>
        <dbReference type="ChEBI" id="CHEBI:17821"/>
        <dbReference type="ChEBI" id="CHEBI:43474"/>
        <dbReference type="ChEBI" id="CHEBI:57259"/>
        <dbReference type="EC" id="2.4.2.2"/>
    </reaction>
</comment>
<comment type="catalytic activity">
    <reaction evidence="1">
        <text>uridine + phosphate = alpha-D-ribose 1-phosphate + uracil</text>
        <dbReference type="Rhea" id="RHEA:24388"/>
        <dbReference type="ChEBI" id="CHEBI:16704"/>
        <dbReference type="ChEBI" id="CHEBI:17568"/>
        <dbReference type="ChEBI" id="CHEBI:43474"/>
        <dbReference type="ChEBI" id="CHEBI:57720"/>
        <dbReference type="EC" id="2.4.2.2"/>
    </reaction>
</comment>
<comment type="catalytic activity">
    <reaction evidence="1">
        <text>xanthosine + phosphate = alpha-D-ribose 1-phosphate + xanthine</text>
        <dbReference type="Rhea" id="RHEA:27638"/>
        <dbReference type="ChEBI" id="CHEBI:17712"/>
        <dbReference type="ChEBI" id="CHEBI:18107"/>
        <dbReference type="ChEBI" id="CHEBI:43474"/>
        <dbReference type="ChEBI" id="CHEBI:57720"/>
        <dbReference type="EC" id="2.4.2.1"/>
    </reaction>
</comment>
<comment type="similarity">
    <text evidence="1">Belongs to the nucleoside phosphorylase PpnP family.</text>
</comment>
<protein>
    <recommendedName>
        <fullName evidence="1">Pyrimidine/purine nucleoside phosphorylase</fullName>
        <ecNumber evidence="1">2.4.2.1</ecNumber>
        <ecNumber evidence="1">2.4.2.2</ecNumber>
    </recommendedName>
    <alternativeName>
        <fullName evidence="1">Adenosine phosphorylase</fullName>
    </alternativeName>
    <alternativeName>
        <fullName evidence="1">Cytidine phosphorylase</fullName>
    </alternativeName>
    <alternativeName>
        <fullName evidence="1">Guanosine phosphorylase</fullName>
    </alternativeName>
    <alternativeName>
        <fullName evidence="1">Inosine phosphorylase</fullName>
    </alternativeName>
    <alternativeName>
        <fullName evidence="1">Thymidine phosphorylase</fullName>
    </alternativeName>
    <alternativeName>
        <fullName evidence="1">Uridine phosphorylase</fullName>
    </alternativeName>
    <alternativeName>
        <fullName evidence="1">Xanthosine phosphorylase</fullName>
    </alternativeName>
</protein>
<sequence>MIKENSYFAGNVKSLGFNQQGEDSSVGVMLPGNYTFGTDAPERMTVVKGALVIKREGDEEWSTYQAGEAFEVAGKSSFDLQVEVATAYLCEYL</sequence>
<evidence type="ECO:0000255" key="1">
    <source>
        <dbReference type="HAMAP-Rule" id="MF_01537"/>
    </source>
</evidence>
<organism>
    <name type="scientific">Vibrio vulnificus (strain CMCP6)</name>
    <dbReference type="NCBI Taxonomy" id="216895"/>
    <lineage>
        <taxon>Bacteria</taxon>
        <taxon>Pseudomonadati</taxon>
        <taxon>Pseudomonadota</taxon>
        <taxon>Gammaproteobacteria</taxon>
        <taxon>Vibrionales</taxon>
        <taxon>Vibrionaceae</taxon>
        <taxon>Vibrio</taxon>
    </lineage>
</organism>